<reference key="1">
    <citation type="journal article" date="2004" name="Nature">
        <title>Genome evolution in yeasts.</title>
        <authorList>
            <person name="Dujon B."/>
            <person name="Sherman D."/>
            <person name="Fischer G."/>
            <person name="Durrens P."/>
            <person name="Casaregola S."/>
            <person name="Lafontaine I."/>
            <person name="de Montigny J."/>
            <person name="Marck C."/>
            <person name="Neuveglise C."/>
            <person name="Talla E."/>
            <person name="Goffard N."/>
            <person name="Frangeul L."/>
            <person name="Aigle M."/>
            <person name="Anthouard V."/>
            <person name="Babour A."/>
            <person name="Barbe V."/>
            <person name="Barnay S."/>
            <person name="Blanchin S."/>
            <person name="Beckerich J.-M."/>
            <person name="Beyne E."/>
            <person name="Bleykasten C."/>
            <person name="Boisrame A."/>
            <person name="Boyer J."/>
            <person name="Cattolico L."/>
            <person name="Confanioleri F."/>
            <person name="de Daruvar A."/>
            <person name="Despons L."/>
            <person name="Fabre E."/>
            <person name="Fairhead C."/>
            <person name="Ferry-Dumazet H."/>
            <person name="Groppi A."/>
            <person name="Hantraye F."/>
            <person name="Hennequin C."/>
            <person name="Jauniaux N."/>
            <person name="Joyet P."/>
            <person name="Kachouri R."/>
            <person name="Kerrest A."/>
            <person name="Koszul R."/>
            <person name="Lemaire M."/>
            <person name="Lesur I."/>
            <person name="Ma L."/>
            <person name="Muller H."/>
            <person name="Nicaud J.-M."/>
            <person name="Nikolski M."/>
            <person name="Oztas S."/>
            <person name="Ozier-Kalogeropoulos O."/>
            <person name="Pellenz S."/>
            <person name="Potier S."/>
            <person name="Richard G.-F."/>
            <person name="Straub M.-L."/>
            <person name="Suleau A."/>
            <person name="Swennen D."/>
            <person name="Tekaia F."/>
            <person name="Wesolowski-Louvel M."/>
            <person name="Westhof E."/>
            <person name="Wirth B."/>
            <person name="Zeniou-Meyer M."/>
            <person name="Zivanovic Y."/>
            <person name="Bolotin-Fukuhara M."/>
            <person name="Thierry A."/>
            <person name="Bouchier C."/>
            <person name="Caudron B."/>
            <person name="Scarpelli C."/>
            <person name="Gaillardin C."/>
            <person name="Weissenbach J."/>
            <person name="Wincker P."/>
            <person name="Souciet J.-L."/>
        </authorList>
    </citation>
    <scope>NUCLEOTIDE SEQUENCE [LARGE SCALE GENOMIC DNA]</scope>
    <source>
        <strain>ATCC 36239 / CBS 767 / BCRC 21394 / JCM 1990 / NBRC 0083 / IGC 2968</strain>
    </source>
</reference>
<organism>
    <name type="scientific">Debaryomyces hansenii (strain ATCC 36239 / CBS 767 / BCRC 21394 / JCM 1990 / NBRC 0083 / IGC 2968)</name>
    <name type="common">Yeast</name>
    <name type="synonym">Torulaspora hansenii</name>
    <dbReference type="NCBI Taxonomy" id="284592"/>
    <lineage>
        <taxon>Eukaryota</taxon>
        <taxon>Fungi</taxon>
        <taxon>Dikarya</taxon>
        <taxon>Ascomycota</taxon>
        <taxon>Saccharomycotina</taxon>
        <taxon>Pichiomycetes</taxon>
        <taxon>Debaryomycetaceae</taxon>
        <taxon>Debaryomyces</taxon>
    </lineage>
</organism>
<feature type="chain" id="PRO_0000256163" description="tRNA (adenine(58)-N(1))-methyltransferase non-catalytic subunit TRM6">
    <location>
        <begin position="1"/>
        <end position="473"/>
    </location>
</feature>
<feature type="region of interest" description="Disordered" evidence="2">
    <location>
        <begin position="1"/>
        <end position="25"/>
    </location>
</feature>
<feature type="region of interest" description="Disordered" evidence="2">
    <location>
        <begin position="445"/>
        <end position="473"/>
    </location>
</feature>
<gene>
    <name type="primary">TRM6</name>
    <name type="ordered locus">DEHA2F21032g</name>
</gene>
<protein>
    <recommendedName>
        <fullName>tRNA (adenine(58)-N(1))-methyltransferase non-catalytic subunit TRM6</fullName>
    </recommendedName>
    <alternativeName>
        <fullName>tRNA(m1A58)-methyltransferase subunit TRM6</fullName>
        <shortName>tRNA(m1A58)MTase subunit TRM6</shortName>
    </alternativeName>
</protein>
<evidence type="ECO:0000250" key="1">
    <source>
        <dbReference type="UniProtKB" id="P41814"/>
    </source>
</evidence>
<evidence type="ECO:0000256" key="2">
    <source>
        <dbReference type="SAM" id="MobiDB-lite"/>
    </source>
</evidence>
<evidence type="ECO:0000305" key="3"/>
<name>TRM6_DEBHA</name>
<sequence length="473" mass="53611">MASVIEDKMNLDREPEVDSLPQREKSTTIISPNQHALIRLPSEGLKIIDLKPGGIISLGKFGTFAVDGILGYPFGQTFEILEELKVKPIKSMTMQADETSVDNENEELTKDDLTKMLSNSSDNNQNIINIGSKIQKLTSEDVDKLKESGATSDIGQRIIEQMIAGHEGFDKKTLFSQQKYLKRKQQKFLRRFTVEYLGSSQLLQYYIEKDTQRVLDMSEETLGLLLNYANVRPGGKYLLIDETGGIILYAMMERMNGQGTIVSAHDNEHPNHIALRYSDYPEEMQNRMVKSINWLQFLEPENEKVEFETATEEEIEEMKHAKRAQYYRREQRAKNINSVIDMVMEGNFDGFISVSTLNMPTLLPEIIPTIGGSRPVVIYSQFKEALLETQHHMSTDKRVLAPSIMETRVRPHQTIPGRMHPVMCMRGFGGYILWGTRVFPRESGITAVGKGSGKSKKEKPEQIPEAVSQQASV</sequence>
<comment type="function">
    <text evidence="1">Substrate-binding subunit of tRNA (adenine-N(1)-)-methyltransferase, which catalyzes the formation of N(1)-methyladenine at position 58 (m1A58) in initiator methionyl-tRNA.</text>
</comment>
<comment type="subunit">
    <text evidence="1">Heterotetramer; composed of two copies of TRM6 and two copies of TRM61.</text>
</comment>
<comment type="subcellular location">
    <subcellularLocation>
        <location evidence="1">Nucleus</location>
    </subcellularLocation>
</comment>
<comment type="similarity">
    <text evidence="3">Belongs to the TRM6/GCD10 family.</text>
</comment>
<comment type="sequence caution" evidence="3">
    <conflict type="erroneous initiation">
        <sequence resource="EMBL-CDS" id="CAG89653"/>
    </conflict>
</comment>
<proteinExistence type="inferred from homology"/>
<accession>Q6BKK7</accession>
<keyword id="KW-0539">Nucleus</keyword>
<keyword id="KW-1185">Reference proteome</keyword>
<keyword id="KW-0694">RNA-binding</keyword>
<keyword id="KW-0819">tRNA processing</keyword>
<dbReference type="EMBL" id="CR382138">
    <property type="protein sequence ID" value="CAG89653.2"/>
    <property type="status" value="ALT_INIT"/>
    <property type="molecule type" value="Genomic_DNA"/>
</dbReference>
<dbReference type="RefSeq" id="XP_461264.2">
    <property type="nucleotide sequence ID" value="XM_461264.2"/>
</dbReference>
<dbReference type="SMR" id="Q6BKK7"/>
<dbReference type="FunCoup" id="Q6BKK7">
    <property type="interactions" value="987"/>
</dbReference>
<dbReference type="STRING" id="284592.Q6BKK7"/>
<dbReference type="GeneID" id="2903972"/>
<dbReference type="KEGG" id="dha:DEHA2F21032g"/>
<dbReference type="eggNOG" id="KOG1416">
    <property type="taxonomic scope" value="Eukaryota"/>
</dbReference>
<dbReference type="HOGENOM" id="CLU_010916_2_0_1"/>
<dbReference type="InParanoid" id="Q6BKK7"/>
<dbReference type="OrthoDB" id="10254665at2759"/>
<dbReference type="Proteomes" id="UP000000599">
    <property type="component" value="Chromosome F"/>
</dbReference>
<dbReference type="GO" id="GO:0005634">
    <property type="term" value="C:nucleus"/>
    <property type="evidence" value="ECO:0007669"/>
    <property type="project" value="UniProtKB-SubCell"/>
</dbReference>
<dbReference type="GO" id="GO:0031515">
    <property type="term" value="C:tRNA (m1A) methyltransferase complex"/>
    <property type="evidence" value="ECO:0007669"/>
    <property type="project" value="InterPro"/>
</dbReference>
<dbReference type="GO" id="GO:0003723">
    <property type="term" value="F:RNA binding"/>
    <property type="evidence" value="ECO:0007669"/>
    <property type="project" value="UniProtKB-KW"/>
</dbReference>
<dbReference type="GO" id="GO:0030488">
    <property type="term" value="P:tRNA methylation"/>
    <property type="evidence" value="ECO:0007669"/>
    <property type="project" value="InterPro"/>
</dbReference>
<dbReference type="InterPro" id="IPR017423">
    <property type="entry name" value="TRM6"/>
</dbReference>
<dbReference type="PANTHER" id="PTHR12945">
    <property type="entry name" value="TRANSLATION INITIATION FACTOR EIF3-RELATED"/>
    <property type="match status" value="1"/>
</dbReference>
<dbReference type="PANTHER" id="PTHR12945:SF0">
    <property type="entry name" value="TRNA (ADENINE(58)-N(1))-METHYLTRANSFERASE NON-CATALYTIC SUBUNIT TRM6"/>
    <property type="match status" value="1"/>
</dbReference>
<dbReference type="Pfam" id="PF04189">
    <property type="entry name" value="Gcd10p"/>
    <property type="match status" value="1"/>
</dbReference>
<dbReference type="PIRSF" id="PIRSF038170">
    <property type="entry name" value="tRNA_m1A_mtfrase"/>
    <property type="match status" value="1"/>
</dbReference>